<dbReference type="EC" id="2.1.3.15" evidence="1"/>
<dbReference type="EC" id="2.1.3.-" evidence="1"/>
<dbReference type="EMBL" id="U00012">
    <property type="protein sequence ID" value="AAA85917.1"/>
    <property type="molecule type" value="Genomic_DNA"/>
</dbReference>
<dbReference type="EMBL" id="AL583919">
    <property type="protein sequence ID" value="CAC30240.1"/>
    <property type="molecule type" value="Genomic_DNA"/>
</dbReference>
<dbReference type="PIR" id="D87000">
    <property type="entry name" value="D87000"/>
</dbReference>
<dbReference type="RefSeq" id="NP_301571.1">
    <property type="nucleotide sequence ID" value="NC_002677.1"/>
</dbReference>
<dbReference type="RefSeq" id="WP_010907895.1">
    <property type="nucleotide sequence ID" value="NC_002677.1"/>
</dbReference>
<dbReference type="SMR" id="P53002"/>
<dbReference type="STRING" id="272631.gene:17574555"/>
<dbReference type="KEGG" id="mle:ML0731"/>
<dbReference type="PATRIC" id="fig|272631.5.peg.1328"/>
<dbReference type="Leproma" id="ML0731"/>
<dbReference type="eggNOG" id="COG4799">
    <property type="taxonomic scope" value="Bacteria"/>
</dbReference>
<dbReference type="HOGENOM" id="CLU_018822_6_2_11"/>
<dbReference type="OrthoDB" id="4434131at2"/>
<dbReference type="UniPathway" id="UPA00915"/>
<dbReference type="Proteomes" id="UP000000806">
    <property type="component" value="Chromosome"/>
</dbReference>
<dbReference type="GO" id="GO:0009317">
    <property type="term" value="C:acetyl-CoA carboxylase complex"/>
    <property type="evidence" value="ECO:0007669"/>
    <property type="project" value="TreeGrafter"/>
</dbReference>
<dbReference type="GO" id="GO:0004658">
    <property type="term" value="F:propionyl-CoA carboxylase activity"/>
    <property type="evidence" value="ECO:0007669"/>
    <property type="project" value="TreeGrafter"/>
</dbReference>
<dbReference type="GO" id="GO:0016740">
    <property type="term" value="F:transferase activity"/>
    <property type="evidence" value="ECO:0007669"/>
    <property type="project" value="UniProtKB-KW"/>
</dbReference>
<dbReference type="FunFam" id="3.90.226.10:FF:000017">
    <property type="entry name" value="Propionyl-CoA carboxylase subunit beta 5"/>
    <property type="match status" value="1"/>
</dbReference>
<dbReference type="FunFam" id="3.90.226.10:FF:000016">
    <property type="entry name" value="Propionyl-CoA carboxylase, beta subunit"/>
    <property type="match status" value="1"/>
</dbReference>
<dbReference type="Gene3D" id="3.90.226.10">
    <property type="entry name" value="2-enoyl-CoA Hydratase, Chain A, domain 1"/>
    <property type="match status" value="2"/>
</dbReference>
<dbReference type="InterPro" id="IPR051047">
    <property type="entry name" value="AccD/PCCB"/>
</dbReference>
<dbReference type="InterPro" id="IPR034733">
    <property type="entry name" value="AcCoA_carboxyl_beta"/>
</dbReference>
<dbReference type="InterPro" id="IPR029045">
    <property type="entry name" value="ClpP/crotonase-like_dom_sf"/>
</dbReference>
<dbReference type="InterPro" id="IPR011763">
    <property type="entry name" value="COA_CT_C"/>
</dbReference>
<dbReference type="InterPro" id="IPR011762">
    <property type="entry name" value="COA_CT_N"/>
</dbReference>
<dbReference type="PANTHER" id="PTHR43842">
    <property type="entry name" value="PROPIONYL-COA CARBOXYLASE BETA CHAIN"/>
    <property type="match status" value="1"/>
</dbReference>
<dbReference type="PANTHER" id="PTHR43842:SF2">
    <property type="entry name" value="PROPIONYL-COA CARBOXYLASE BETA CHAIN, MITOCHONDRIAL"/>
    <property type="match status" value="1"/>
</dbReference>
<dbReference type="Pfam" id="PF01039">
    <property type="entry name" value="Carboxyl_trans"/>
    <property type="match status" value="1"/>
</dbReference>
<dbReference type="SUPFAM" id="SSF52096">
    <property type="entry name" value="ClpP/crotonase"/>
    <property type="match status" value="2"/>
</dbReference>
<dbReference type="PROSITE" id="PS50989">
    <property type="entry name" value="COA_CT_CTER"/>
    <property type="match status" value="1"/>
</dbReference>
<dbReference type="PROSITE" id="PS50980">
    <property type="entry name" value="COA_CT_NTER"/>
    <property type="match status" value="1"/>
</dbReference>
<evidence type="ECO:0000250" key="1">
    <source>
        <dbReference type="UniProtKB" id="P9WQH7"/>
    </source>
</evidence>
<evidence type="ECO:0000255" key="2">
    <source>
        <dbReference type="PROSITE-ProRule" id="PRU01136"/>
    </source>
</evidence>
<evidence type="ECO:0000255" key="3">
    <source>
        <dbReference type="PROSITE-ProRule" id="PRU01137"/>
    </source>
</evidence>
<evidence type="ECO:0000305" key="4"/>
<protein>
    <recommendedName>
        <fullName evidence="1">Biotin-dependent acetyl-/propionyl-coenzyme A carboxylase beta5 subunit</fullName>
    </recommendedName>
    <alternativeName>
        <fullName evidence="1">Acetyl-CoA carboxylase</fullName>
        <shortName evidence="1">ACC</shortName>
        <ecNumber evidence="1">2.1.3.15</ecNumber>
    </alternativeName>
    <alternativeName>
        <fullName evidence="1">Propionyl-CoA carboxylase</fullName>
        <shortName evidence="1">PCC</shortName>
        <ecNumber evidence="1">2.1.3.-</ecNumber>
    </alternativeName>
</protein>
<gene>
    <name type="primary">accD5</name>
    <name type="synonym">pccB</name>
    <name type="ordered locus">ML0731</name>
    <name type="ORF">B1308_C1_125</name>
</gene>
<reference key="1">
    <citation type="journal article" date="1995" name="Gene">
        <title>Genomic organization of the mycobacterial sigma gene cluster.</title>
        <authorList>
            <person name="Doukhan L."/>
            <person name="Predich M."/>
            <person name="Nair G."/>
            <person name="Dussurget O."/>
            <person name="Mandic-Mulec I."/>
            <person name="Cole S.T."/>
            <person name="Smith D.R."/>
            <person name="Smith I."/>
        </authorList>
    </citation>
    <scope>NUCLEOTIDE SEQUENCE [GENOMIC DNA]</scope>
</reference>
<reference key="2">
    <citation type="journal article" date="2001" name="Nature">
        <title>Massive gene decay in the leprosy bacillus.</title>
        <authorList>
            <person name="Cole S.T."/>
            <person name="Eiglmeier K."/>
            <person name="Parkhill J."/>
            <person name="James K.D."/>
            <person name="Thomson N.R."/>
            <person name="Wheeler P.R."/>
            <person name="Honore N."/>
            <person name="Garnier T."/>
            <person name="Churcher C.M."/>
            <person name="Harris D.E."/>
            <person name="Mungall K.L."/>
            <person name="Basham D."/>
            <person name="Brown D."/>
            <person name="Chillingworth T."/>
            <person name="Connor R."/>
            <person name="Davies R.M."/>
            <person name="Devlin K."/>
            <person name="Duthoy S."/>
            <person name="Feltwell T."/>
            <person name="Fraser A."/>
            <person name="Hamlin N."/>
            <person name="Holroyd S."/>
            <person name="Hornsby T."/>
            <person name="Jagels K."/>
            <person name="Lacroix C."/>
            <person name="Maclean J."/>
            <person name="Moule S."/>
            <person name="Murphy L.D."/>
            <person name="Oliver K."/>
            <person name="Quail M.A."/>
            <person name="Rajandream M.A."/>
            <person name="Rutherford K.M."/>
            <person name="Rutter S."/>
            <person name="Seeger K."/>
            <person name="Simon S."/>
            <person name="Simmonds M."/>
            <person name="Skelton J."/>
            <person name="Squares R."/>
            <person name="Squares S."/>
            <person name="Stevens K."/>
            <person name="Taylor K."/>
            <person name="Whitehead S."/>
            <person name="Woodward J.R."/>
            <person name="Barrell B.G."/>
        </authorList>
    </citation>
    <scope>NUCLEOTIDE SEQUENCE [LARGE SCALE GENOMIC DNA]</scope>
    <source>
        <strain>TN</strain>
    </source>
</reference>
<organism>
    <name type="scientific">Mycobacterium leprae (strain TN)</name>
    <dbReference type="NCBI Taxonomy" id="272631"/>
    <lineage>
        <taxon>Bacteria</taxon>
        <taxon>Bacillati</taxon>
        <taxon>Actinomycetota</taxon>
        <taxon>Actinomycetes</taxon>
        <taxon>Mycobacteriales</taxon>
        <taxon>Mycobacteriaceae</taxon>
        <taxon>Mycobacterium</taxon>
    </lineage>
</organism>
<sequence length="549" mass="59396">MTSVTDHSAHSMERAAEHTINIHTTAGKLAELHKRTEEALHPVGAAAFEKVHAKGKFTARERIYALLDDDSFVELDALARHRSTNFGLGENRPVGDGVVTGYGTIDGRDVCIFSQDVTVFGGSLGEVYGEKIVKVQELAIKTGRPLIGINDGAGARIQEGVVSLGLYSRIFRNNILASGVIPQISLIMGAAAGGHVYSPALTDFVVMVDQTSQMFITGPDVIKTVTGEDVTMEELGGAHTHMAKSGTAHYVASGEQDAFDWVRDVLSYLPSNNFTDAPRYSKPVPHGSIEDNLTAKDLELDTLIPDSPNQPYDMHEVVTRLLDEEEFLEVQAGYATNIVVGLGRIDDRPVGIVANQPIQFAGCLDINASEKAARFVRVCDCFNIPIVMLVDVPGFLPGTEQEYDGIIRRGAKLLFAYGEATVPKITVITRKAYGGAYCVMGSKNMGCDVNLAWPTAQIAVMGASGAVGFVYRKELAQAAKNGANVDELRLQLQQEYEDTLVNPYIAAERGYVDAVIPPSHTRGYIATALHLLERKIAHLPPKKHGNIPL</sequence>
<name>ACCD5_MYCLE</name>
<accession>P53002</accession>
<comment type="function">
    <text evidence="1">Component of a biotin-dependent acyl-CoA carboxylase complex. This subunit transfers the CO2 from carboxybiotin to the CoA ester substrate. When associated with the alpha3 subunit AccA3, is involved in the carboxylation of acetyl-CoA and propionyl-CoA.</text>
</comment>
<comment type="catalytic activity">
    <reaction evidence="1">
        <text>N(6)-carboxybiotinyl-L-lysyl-[protein] + acetyl-CoA = N(6)-biotinyl-L-lysyl-[protein] + malonyl-CoA</text>
        <dbReference type="Rhea" id="RHEA:54728"/>
        <dbReference type="Rhea" id="RHEA-COMP:10505"/>
        <dbReference type="Rhea" id="RHEA-COMP:10506"/>
        <dbReference type="ChEBI" id="CHEBI:57288"/>
        <dbReference type="ChEBI" id="CHEBI:57384"/>
        <dbReference type="ChEBI" id="CHEBI:83144"/>
        <dbReference type="ChEBI" id="CHEBI:83145"/>
        <dbReference type="EC" id="2.1.3.15"/>
    </reaction>
    <physiologicalReaction direction="left-to-right" evidence="1">
        <dbReference type="Rhea" id="RHEA:54729"/>
    </physiologicalReaction>
</comment>
<comment type="catalytic activity">
    <reaction evidence="1">
        <text>N(6)-carboxybiotinyl-L-lysyl-[protein] + propanoyl-CoA = methylmalonyl-CoA + N(6)-biotinyl-L-lysyl-[protein]</text>
        <dbReference type="Rhea" id="RHEA:66612"/>
        <dbReference type="Rhea" id="RHEA-COMP:10505"/>
        <dbReference type="Rhea" id="RHEA-COMP:10506"/>
        <dbReference type="ChEBI" id="CHEBI:57392"/>
        <dbReference type="ChEBI" id="CHEBI:59916"/>
        <dbReference type="ChEBI" id="CHEBI:83144"/>
        <dbReference type="ChEBI" id="CHEBI:83145"/>
    </reaction>
    <physiologicalReaction direction="left-to-right" evidence="1">
        <dbReference type="Rhea" id="RHEA:66613"/>
    </physiologicalReaction>
</comment>
<comment type="pathway">
    <text evidence="1">Lipid metabolism; mycolic acid biosynthesis.</text>
</comment>
<comment type="subunit">
    <text evidence="1">The biotin-dependent acyl-CoA carboxylase complex is composed of AccA3, which contains the biotin carboxylase (BC) and biotin carboxyl carrier protein (BCCP) domains, and AccD5, which contains the carboxyl transferase (CT) domain.</text>
</comment>
<comment type="similarity">
    <text evidence="4">Belongs to the AccD/PCCB family.</text>
</comment>
<keyword id="KW-1185">Reference proteome</keyword>
<keyword id="KW-0808">Transferase</keyword>
<feature type="chain" id="PRO_0000199798" description="Biotin-dependent acetyl-/propionyl-coenzyme A carboxylase beta5 subunit">
    <location>
        <begin position="1"/>
        <end position="549"/>
    </location>
</feature>
<feature type="domain" description="CoA carboxyltransferase N-terminal" evidence="2">
    <location>
        <begin position="25"/>
        <end position="281"/>
    </location>
</feature>
<feature type="domain" description="CoA carboxyltransferase C-terminal" evidence="3">
    <location>
        <begin position="295"/>
        <end position="542"/>
    </location>
</feature>
<proteinExistence type="inferred from homology"/>